<name>ISPH_CHRSD</name>
<comment type="function">
    <text evidence="1">Catalyzes the conversion of 1-hydroxy-2-methyl-2-(E)-butenyl 4-diphosphate (HMBPP) into a mixture of isopentenyl diphosphate (IPP) and dimethylallyl diphosphate (DMAPP). Acts in the terminal step of the DOXP/MEP pathway for isoprenoid precursor biosynthesis.</text>
</comment>
<comment type="catalytic activity">
    <reaction evidence="1">
        <text>isopentenyl diphosphate + 2 oxidized [2Fe-2S]-[ferredoxin] + H2O = (2E)-4-hydroxy-3-methylbut-2-enyl diphosphate + 2 reduced [2Fe-2S]-[ferredoxin] + 2 H(+)</text>
        <dbReference type="Rhea" id="RHEA:24488"/>
        <dbReference type="Rhea" id="RHEA-COMP:10000"/>
        <dbReference type="Rhea" id="RHEA-COMP:10001"/>
        <dbReference type="ChEBI" id="CHEBI:15377"/>
        <dbReference type="ChEBI" id="CHEBI:15378"/>
        <dbReference type="ChEBI" id="CHEBI:33737"/>
        <dbReference type="ChEBI" id="CHEBI:33738"/>
        <dbReference type="ChEBI" id="CHEBI:128753"/>
        <dbReference type="ChEBI" id="CHEBI:128769"/>
        <dbReference type="EC" id="1.17.7.4"/>
    </reaction>
</comment>
<comment type="catalytic activity">
    <reaction evidence="1">
        <text>dimethylallyl diphosphate + 2 oxidized [2Fe-2S]-[ferredoxin] + H2O = (2E)-4-hydroxy-3-methylbut-2-enyl diphosphate + 2 reduced [2Fe-2S]-[ferredoxin] + 2 H(+)</text>
        <dbReference type="Rhea" id="RHEA:24825"/>
        <dbReference type="Rhea" id="RHEA-COMP:10000"/>
        <dbReference type="Rhea" id="RHEA-COMP:10001"/>
        <dbReference type="ChEBI" id="CHEBI:15377"/>
        <dbReference type="ChEBI" id="CHEBI:15378"/>
        <dbReference type="ChEBI" id="CHEBI:33737"/>
        <dbReference type="ChEBI" id="CHEBI:33738"/>
        <dbReference type="ChEBI" id="CHEBI:57623"/>
        <dbReference type="ChEBI" id="CHEBI:128753"/>
        <dbReference type="EC" id="1.17.7.4"/>
    </reaction>
</comment>
<comment type="cofactor">
    <cofactor evidence="1">
        <name>[4Fe-4S] cluster</name>
        <dbReference type="ChEBI" id="CHEBI:49883"/>
    </cofactor>
    <text evidence="1">Binds 1 [4Fe-4S] cluster per subunit.</text>
</comment>
<comment type="pathway">
    <text evidence="1">Isoprenoid biosynthesis; dimethylallyl diphosphate biosynthesis; dimethylallyl diphosphate from (2E)-4-hydroxy-3-methylbutenyl diphosphate: step 1/1.</text>
</comment>
<comment type="pathway">
    <text evidence="1">Isoprenoid biosynthesis; isopentenyl diphosphate biosynthesis via DXP pathway; isopentenyl diphosphate from 1-deoxy-D-xylulose 5-phosphate: step 6/6.</text>
</comment>
<comment type="similarity">
    <text evidence="1">Belongs to the IspH family.</text>
</comment>
<proteinExistence type="inferred from homology"/>
<organism>
    <name type="scientific">Chromohalobacter salexigens (strain ATCC BAA-138 / DSM 3043 / CIP 106854 / NCIMB 13768 / 1H11)</name>
    <dbReference type="NCBI Taxonomy" id="290398"/>
    <lineage>
        <taxon>Bacteria</taxon>
        <taxon>Pseudomonadati</taxon>
        <taxon>Pseudomonadota</taxon>
        <taxon>Gammaproteobacteria</taxon>
        <taxon>Oceanospirillales</taxon>
        <taxon>Halomonadaceae</taxon>
        <taxon>Chromohalobacter</taxon>
    </lineage>
</organism>
<keyword id="KW-0004">4Fe-4S</keyword>
<keyword id="KW-0408">Iron</keyword>
<keyword id="KW-0411">Iron-sulfur</keyword>
<keyword id="KW-0414">Isoprene biosynthesis</keyword>
<keyword id="KW-0479">Metal-binding</keyword>
<keyword id="KW-0560">Oxidoreductase</keyword>
<keyword id="KW-1185">Reference proteome</keyword>
<feature type="chain" id="PRO_1000021103" description="4-hydroxy-3-methylbut-2-enyl diphosphate reductase">
    <location>
        <begin position="1"/>
        <end position="317"/>
    </location>
</feature>
<feature type="active site" description="Proton donor" evidence="1">
    <location>
        <position position="126"/>
    </location>
</feature>
<feature type="binding site" evidence="1">
    <location>
        <position position="12"/>
    </location>
    <ligand>
        <name>[4Fe-4S] cluster</name>
        <dbReference type="ChEBI" id="CHEBI:49883"/>
    </ligand>
</feature>
<feature type="binding site" evidence="1">
    <location>
        <position position="41"/>
    </location>
    <ligand>
        <name>(2E)-4-hydroxy-3-methylbut-2-enyl diphosphate</name>
        <dbReference type="ChEBI" id="CHEBI:128753"/>
    </ligand>
</feature>
<feature type="binding site" evidence="1">
    <location>
        <position position="41"/>
    </location>
    <ligand>
        <name>dimethylallyl diphosphate</name>
        <dbReference type="ChEBI" id="CHEBI:57623"/>
    </ligand>
</feature>
<feature type="binding site" evidence="1">
    <location>
        <position position="41"/>
    </location>
    <ligand>
        <name>isopentenyl diphosphate</name>
        <dbReference type="ChEBI" id="CHEBI:128769"/>
    </ligand>
</feature>
<feature type="binding site" evidence="1">
    <location>
        <position position="74"/>
    </location>
    <ligand>
        <name>(2E)-4-hydroxy-3-methylbut-2-enyl diphosphate</name>
        <dbReference type="ChEBI" id="CHEBI:128753"/>
    </ligand>
</feature>
<feature type="binding site" evidence="1">
    <location>
        <position position="74"/>
    </location>
    <ligand>
        <name>dimethylallyl diphosphate</name>
        <dbReference type="ChEBI" id="CHEBI:57623"/>
    </ligand>
</feature>
<feature type="binding site" evidence="1">
    <location>
        <position position="74"/>
    </location>
    <ligand>
        <name>isopentenyl diphosphate</name>
        <dbReference type="ChEBI" id="CHEBI:128769"/>
    </ligand>
</feature>
<feature type="binding site" evidence="1">
    <location>
        <position position="96"/>
    </location>
    <ligand>
        <name>[4Fe-4S] cluster</name>
        <dbReference type="ChEBI" id="CHEBI:49883"/>
    </ligand>
</feature>
<feature type="binding site" evidence="1">
    <location>
        <position position="124"/>
    </location>
    <ligand>
        <name>(2E)-4-hydroxy-3-methylbut-2-enyl diphosphate</name>
        <dbReference type="ChEBI" id="CHEBI:128753"/>
    </ligand>
</feature>
<feature type="binding site" evidence="1">
    <location>
        <position position="124"/>
    </location>
    <ligand>
        <name>dimethylallyl diphosphate</name>
        <dbReference type="ChEBI" id="CHEBI:57623"/>
    </ligand>
</feature>
<feature type="binding site" evidence="1">
    <location>
        <position position="124"/>
    </location>
    <ligand>
        <name>isopentenyl diphosphate</name>
        <dbReference type="ChEBI" id="CHEBI:128769"/>
    </ligand>
</feature>
<feature type="binding site" evidence="1">
    <location>
        <position position="168"/>
    </location>
    <ligand>
        <name>(2E)-4-hydroxy-3-methylbut-2-enyl diphosphate</name>
        <dbReference type="ChEBI" id="CHEBI:128753"/>
    </ligand>
</feature>
<feature type="binding site" evidence="1">
    <location>
        <position position="198"/>
    </location>
    <ligand>
        <name>[4Fe-4S] cluster</name>
        <dbReference type="ChEBI" id="CHEBI:49883"/>
    </ligand>
</feature>
<feature type="binding site" evidence="1">
    <location>
        <position position="226"/>
    </location>
    <ligand>
        <name>(2E)-4-hydroxy-3-methylbut-2-enyl diphosphate</name>
        <dbReference type="ChEBI" id="CHEBI:128753"/>
    </ligand>
</feature>
<feature type="binding site" evidence="1">
    <location>
        <position position="226"/>
    </location>
    <ligand>
        <name>dimethylallyl diphosphate</name>
        <dbReference type="ChEBI" id="CHEBI:57623"/>
    </ligand>
</feature>
<feature type="binding site" evidence="1">
    <location>
        <position position="226"/>
    </location>
    <ligand>
        <name>isopentenyl diphosphate</name>
        <dbReference type="ChEBI" id="CHEBI:128769"/>
    </ligand>
</feature>
<feature type="binding site" evidence="1">
    <location>
        <position position="227"/>
    </location>
    <ligand>
        <name>(2E)-4-hydroxy-3-methylbut-2-enyl diphosphate</name>
        <dbReference type="ChEBI" id="CHEBI:128753"/>
    </ligand>
</feature>
<feature type="binding site" evidence="1">
    <location>
        <position position="227"/>
    </location>
    <ligand>
        <name>dimethylallyl diphosphate</name>
        <dbReference type="ChEBI" id="CHEBI:57623"/>
    </ligand>
</feature>
<feature type="binding site" evidence="1">
    <location>
        <position position="227"/>
    </location>
    <ligand>
        <name>isopentenyl diphosphate</name>
        <dbReference type="ChEBI" id="CHEBI:128769"/>
    </ligand>
</feature>
<feature type="binding site" evidence="1">
    <location>
        <position position="228"/>
    </location>
    <ligand>
        <name>(2E)-4-hydroxy-3-methylbut-2-enyl diphosphate</name>
        <dbReference type="ChEBI" id="CHEBI:128753"/>
    </ligand>
</feature>
<feature type="binding site" evidence="1">
    <location>
        <position position="228"/>
    </location>
    <ligand>
        <name>dimethylallyl diphosphate</name>
        <dbReference type="ChEBI" id="CHEBI:57623"/>
    </ligand>
</feature>
<feature type="binding site" evidence="1">
    <location>
        <position position="228"/>
    </location>
    <ligand>
        <name>isopentenyl diphosphate</name>
        <dbReference type="ChEBI" id="CHEBI:128769"/>
    </ligand>
</feature>
<feature type="binding site" evidence="1">
    <location>
        <position position="270"/>
    </location>
    <ligand>
        <name>(2E)-4-hydroxy-3-methylbut-2-enyl diphosphate</name>
        <dbReference type="ChEBI" id="CHEBI:128753"/>
    </ligand>
</feature>
<feature type="binding site" evidence="1">
    <location>
        <position position="270"/>
    </location>
    <ligand>
        <name>dimethylallyl diphosphate</name>
        <dbReference type="ChEBI" id="CHEBI:57623"/>
    </ligand>
</feature>
<feature type="binding site" evidence="1">
    <location>
        <position position="270"/>
    </location>
    <ligand>
        <name>isopentenyl diphosphate</name>
        <dbReference type="ChEBI" id="CHEBI:128769"/>
    </ligand>
</feature>
<evidence type="ECO:0000255" key="1">
    <source>
        <dbReference type="HAMAP-Rule" id="MF_00191"/>
    </source>
</evidence>
<gene>
    <name evidence="1" type="primary">ispH</name>
    <name type="ordered locus">Csal_0484</name>
</gene>
<reference key="1">
    <citation type="journal article" date="2011" name="Stand. Genomic Sci.">
        <title>Complete genome sequence of the halophilic and highly halotolerant Chromohalobacter salexigens type strain (1H11(T)).</title>
        <authorList>
            <person name="Copeland A."/>
            <person name="O'Connor K."/>
            <person name="Lucas S."/>
            <person name="Lapidus A."/>
            <person name="Berry K.W."/>
            <person name="Detter J.C."/>
            <person name="Del Rio T.G."/>
            <person name="Hammon N."/>
            <person name="Dalin E."/>
            <person name="Tice H."/>
            <person name="Pitluck S."/>
            <person name="Bruce D."/>
            <person name="Goodwin L."/>
            <person name="Han C."/>
            <person name="Tapia R."/>
            <person name="Saunders E."/>
            <person name="Schmutz J."/>
            <person name="Brettin T."/>
            <person name="Larimer F."/>
            <person name="Land M."/>
            <person name="Hauser L."/>
            <person name="Vargas C."/>
            <person name="Nieto J.J."/>
            <person name="Kyrpides N.C."/>
            <person name="Ivanova N."/>
            <person name="Goker M."/>
            <person name="Klenk H.P."/>
            <person name="Csonka L.N."/>
            <person name="Woyke T."/>
        </authorList>
    </citation>
    <scope>NUCLEOTIDE SEQUENCE [LARGE SCALE GENOMIC DNA]</scope>
    <source>
        <strain>ATCC BAA-138 / DSM 3043 / CIP 106854 / NCIMB 13768 / 1H11</strain>
    </source>
</reference>
<sequence length="317" mass="34913">MQIKLANPRGFCAGVDRAIEIVNRALDVFGPPIYVRHEVVHNRFVVDSLRERGAVFVEELHEVPDDVIVIFSAHGVSRAVQQEAERRGLRIFDATCPLVTKVHMEVLRYAKRGQECVLIGHAGHPEVEGTMGRYDTSFGGQIYLVEDEADVENLEVNGPERLAFVTQTTLSMDDTSRVIDALRAKFPQIDGPRKDDICYATQNRQDAVRGLASESDLVLVVGSPNSSNSNRLRELAERTGTPAYLIDTAEQIRPEWLTDVSAIGITAGASAPEVLVQAVIERLQSLGAEAPDELAGQAENITFSMPQELRERVIASE</sequence>
<protein>
    <recommendedName>
        <fullName evidence="1">4-hydroxy-3-methylbut-2-enyl diphosphate reductase</fullName>
        <shortName evidence="1">HMBPP reductase</shortName>
        <ecNumber evidence="1">1.17.7.4</ecNumber>
    </recommendedName>
</protein>
<dbReference type="EC" id="1.17.7.4" evidence="1"/>
<dbReference type="EMBL" id="CP000285">
    <property type="protein sequence ID" value="ABE57846.1"/>
    <property type="molecule type" value="Genomic_DNA"/>
</dbReference>
<dbReference type="RefSeq" id="WP_011505792.1">
    <property type="nucleotide sequence ID" value="NC_007963.1"/>
</dbReference>
<dbReference type="SMR" id="Q1R0B2"/>
<dbReference type="STRING" id="290398.Csal_0484"/>
<dbReference type="GeneID" id="95333237"/>
<dbReference type="KEGG" id="csa:Csal_0484"/>
<dbReference type="eggNOG" id="COG0761">
    <property type="taxonomic scope" value="Bacteria"/>
</dbReference>
<dbReference type="HOGENOM" id="CLU_027486_1_0_6"/>
<dbReference type="OrthoDB" id="9804068at2"/>
<dbReference type="UniPathway" id="UPA00056">
    <property type="reaction ID" value="UER00097"/>
</dbReference>
<dbReference type="UniPathway" id="UPA00059">
    <property type="reaction ID" value="UER00105"/>
</dbReference>
<dbReference type="Proteomes" id="UP000000239">
    <property type="component" value="Chromosome"/>
</dbReference>
<dbReference type="GO" id="GO:0051539">
    <property type="term" value="F:4 iron, 4 sulfur cluster binding"/>
    <property type="evidence" value="ECO:0007669"/>
    <property type="project" value="UniProtKB-UniRule"/>
</dbReference>
<dbReference type="GO" id="GO:0051745">
    <property type="term" value="F:4-hydroxy-3-methylbut-2-enyl diphosphate reductase activity"/>
    <property type="evidence" value="ECO:0007669"/>
    <property type="project" value="UniProtKB-UniRule"/>
</dbReference>
<dbReference type="GO" id="GO:0046872">
    <property type="term" value="F:metal ion binding"/>
    <property type="evidence" value="ECO:0007669"/>
    <property type="project" value="UniProtKB-KW"/>
</dbReference>
<dbReference type="GO" id="GO:0050992">
    <property type="term" value="P:dimethylallyl diphosphate biosynthetic process"/>
    <property type="evidence" value="ECO:0007669"/>
    <property type="project" value="UniProtKB-UniRule"/>
</dbReference>
<dbReference type="GO" id="GO:0019288">
    <property type="term" value="P:isopentenyl diphosphate biosynthetic process, methylerythritol 4-phosphate pathway"/>
    <property type="evidence" value="ECO:0007669"/>
    <property type="project" value="UniProtKB-UniRule"/>
</dbReference>
<dbReference type="GO" id="GO:0016114">
    <property type="term" value="P:terpenoid biosynthetic process"/>
    <property type="evidence" value="ECO:0007669"/>
    <property type="project" value="UniProtKB-UniRule"/>
</dbReference>
<dbReference type="CDD" id="cd13944">
    <property type="entry name" value="lytB_ispH"/>
    <property type="match status" value="1"/>
</dbReference>
<dbReference type="Gene3D" id="3.40.50.11270">
    <property type="match status" value="1"/>
</dbReference>
<dbReference type="Gene3D" id="3.40.1010.20">
    <property type="entry name" value="4-hydroxy-3-methylbut-2-enyl diphosphate reductase, catalytic domain"/>
    <property type="match status" value="2"/>
</dbReference>
<dbReference type="HAMAP" id="MF_00191">
    <property type="entry name" value="IspH"/>
    <property type="match status" value="1"/>
</dbReference>
<dbReference type="InterPro" id="IPR003451">
    <property type="entry name" value="LytB/IspH"/>
</dbReference>
<dbReference type="NCBIfam" id="TIGR00216">
    <property type="entry name" value="ispH_lytB"/>
    <property type="match status" value="1"/>
</dbReference>
<dbReference type="NCBIfam" id="NF002188">
    <property type="entry name" value="PRK01045.1-2"/>
    <property type="match status" value="1"/>
</dbReference>
<dbReference type="NCBIfam" id="NF002190">
    <property type="entry name" value="PRK01045.1-4"/>
    <property type="match status" value="1"/>
</dbReference>
<dbReference type="PANTHER" id="PTHR30426">
    <property type="entry name" value="4-HYDROXY-3-METHYLBUT-2-ENYL DIPHOSPHATE REDUCTASE"/>
    <property type="match status" value="1"/>
</dbReference>
<dbReference type="PANTHER" id="PTHR30426:SF0">
    <property type="entry name" value="4-HYDROXY-3-METHYLBUT-2-ENYL DIPHOSPHATE REDUCTASE"/>
    <property type="match status" value="1"/>
</dbReference>
<dbReference type="Pfam" id="PF02401">
    <property type="entry name" value="LYTB"/>
    <property type="match status" value="1"/>
</dbReference>
<accession>Q1R0B2</accession>